<proteinExistence type="evidence at protein level"/>
<name>YQEG_ECOLI</name>
<keyword id="KW-0997">Cell inner membrane</keyword>
<keyword id="KW-1003">Cell membrane</keyword>
<keyword id="KW-0472">Membrane</keyword>
<keyword id="KW-1185">Reference proteome</keyword>
<keyword id="KW-0812">Transmembrane</keyword>
<keyword id="KW-1133">Transmembrane helix</keyword>
<keyword id="KW-0813">Transport</keyword>
<dbReference type="EMBL" id="U29581">
    <property type="protein sequence ID" value="AAB40492.1"/>
    <property type="molecule type" value="Genomic_DNA"/>
</dbReference>
<dbReference type="EMBL" id="U00096">
    <property type="protein sequence ID" value="AAC75884.1"/>
    <property type="molecule type" value="Genomic_DNA"/>
</dbReference>
<dbReference type="EMBL" id="AP009048">
    <property type="protein sequence ID" value="BAE76914.1"/>
    <property type="molecule type" value="Genomic_DNA"/>
</dbReference>
<dbReference type="PIR" id="F65067">
    <property type="entry name" value="F65067"/>
</dbReference>
<dbReference type="RefSeq" id="NP_417322.1">
    <property type="nucleotide sequence ID" value="NC_000913.3"/>
</dbReference>
<dbReference type="RefSeq" id="WP_000065950.1">
    <property type="nucleotide sequence ID" value="NZ_STEB01000034.1"/>
</dbReference>
<dbReference type="SMR" id="P63340"/>
<dbReference type="BioGRID" id="4263513">
    <property type="interactions" value="126"/>
</dbReference>
<dbReference type="FunCoup" id="P63340">
    <property type="interactions" value="5"/>
</dbReference>
<dbReference type="STRING" id="511145.b2845"/>
<dbReference type="TCDB" id="2.A.42.2.5">
    <property type="family name" value="the hydroxy/aromatic amino acid permease (haaap) family"/>
</dbReference>
<dbReference type="jPOST" id="P63340"/>
<dbReference type="PaxDb" id="511145-b2845"/>
<dbReference type="EnsemblBacteria" id="AAC75884">
    <property type="protein sequence ID" value="AAC75884"/>
    <property type="gene ID" value="b2845"/>
</dbReference>
<dbReference type="GeneID" id="945028"/>
<dbReference type="KEGG" id="ecj:JW2813"/>
<dbReference type="KEGG" id="eco:b2845"/>
<dbReference type="KEGG" id="ecoc:C3026_15620"/>
<dbReference type="PATRIC" id="fig|1411691.4.peg.3889"/>
<dbReference type="EchoBASE" id="EB2901"/>
<dbReference type="eggNOG" id="COG0814">
    <property type="taxonomic scope" value="Bacteria"/>
</dbReference>
<dbReference type="HOGENOM" id="CLU_052043_1_1_6"/>
<dbReference type="InParanoid" id="P63340"/>
<dbReference type="OMA" id="TYWPHRA"/>
<dbReference type="OrthoDB" id="1627372at2"/>
<dbReference type="PhylomeDB" id="P63340"/>
<dbReference type="BioCyc" id="EcoCyc:B2845-MONOMER"/>
<dbReference type="PRO" id="PR:P63340"/>
<dbReference type="Proteomes" id="UP000000625">
    <property type="component" value="Chromosome"/>
</dbReference>
<dbReference type="GO" id="GO:0005886">
    <property type="term" value="C:plasma membrane"/>
    <property type="evidence" value="ECO:0000314"/>
    <property type="project" value="EcoCyc"/>
</dbReference>
<dbReference type="GO" id="GO:0022857">
    <property type="term" value="F:transmembrane transporter activity"/>
    <property type="evidence" value="ECO:0000318"/>
    <property type="project" value="GO_Central"/>
</dbReference>
<dbReference type="GO" id="GO:0003333">
    <property type="term" value="P:amino acid transmembrane transport"/>
    <property type="evidence" value="ECO:0007669"/>
    <property type="project" value="InterPro"/>
</dbReference>
<dbReference type="GO" id="GO:0006865">
    <property type="term" value="P:amino acid transport"/>
    <property type="evidence" value="ECO:0000318"/>
    <property type="project" value="GO_Central"/>
</dbReference>
<dbReference type="FunFam" id="1.20.1740.10:FF:000028">
    <property type="entry name" value="Inner membrane transporter YqeG"/>
    <property type="match status" value="1"/>
</dbReference>
<dbReference type="Gene3D" id="1.20.1740.10">
    <property type="entry name" value="Amino acid/polyamine transporter I"/>
    <property type="match status" value="1"/>
</dbReference>
<dbReference type="InterPro" id="IPR018227">
    <property type="entry name" value="Amino_acid_transport_2"/>
</dbReference>
<dbReference type="PANTHER" id="PTHR35334:SF3">
    <property type="entry name" value="INNER MEMBRANE TRANSPORT PROTEIN YQEG"/>
    <property type="match status" value="1"/>
</dbReference>
<dbReference type="PANTHER" id="PTHR35334">
    <property type="entry name" value="SERINE TRANSPORTER"/>
    <property type="match status" value="1"/>
</dbReference>
<dbReference type="Pfam" id="PF03222">
    <property type="entry name" value="Trp_Tyr_perm"/>
    <property type="match status" value="1"/>
</dbReference>
<sequence>MSNIWSKEETLWSFALYGTAVGAGTLFLPIQLGSAGAVVLFITALVAWPLTYWPHKALCQFILSSKTSAGEGITGAVTHYYGKKIGNLITTLYFIAFFVVVLIYAVAITNSLTEQLAKHMVIDLRIRMLVSLGVVLILNLIFLMGRHATIRVMGFLVFPLIAYFLFLSIYLVGSWQPDLLTTQVEFNQNTLHQIWISIPVMVFAFSHTPIISTFAIDRREKYGEHAMDKCKKIMKVAYLIICISVLFFVFSCLLSIPPSYIEAAKEEGVTILSALSMLPNAPAWLSISGIIVAVVAMSKSFLGTYFGVIEGATEVVKTTLQQVGVKKSRAFNRALSIMLVSLITFIVCCINPNAISMIYAISGPLIAMILFIMPTLSTYLIPALKPWRSIGNLITLIVGILCVSVMFFS</sequence>
<accession>P63340</accession>
<accession>Q2M9Z2</accession>
<accession>Q46940</accession>
<organism>
    <name type="scientific">Escherichia coli (strain K12)</name>
    <dbReference type="NCBI Taxonomy" id="83333"/>
    <lineage>
        <taxon>Bacteria</taxon>
        <taxon>Pseudomonadati</taxon>
        <taxon>Pseudomonadota</taxon>
        <taxon>Gammaproteobacteria</taxon>
        <taxon>Enterobacterales</taxon>
        <taxon>Enterobacteriaceae</taxon>
        <taxon>Escherichia</taxon>
    </lineage>
</organism>
<evidence type="ECO:0000255" key="1"/>
<evidence type="ECO:0000305" key="2"/>
<comment type="subcellular location">
    <subcellularLocation>
        <location>Cell inner membrane</location>
        <topology>Multi-pass membrane protein</topology>
    </subcellularLocation>
</comment>
<comment type="similarity">
    <text evidence="2">Belongs to the amino acid/polyamine transporter 2 family. SdaC/TdcC subfamily.</text>
</comment>
<feature type="chain" id="PRO_0000093814" description="Inner membrane transport protein YqeG">
    <location>
        <begin position="1"/>
        <end position="409"/>
    </location>
</feature>
<feature type="topological domain" description="Periplasmic" evidence="1">
    <location>
        <begin position="1"/>
        <end position="25"/>
    </location>
</feature>
<feature type="transmembrane region" description="Helical" evidence="1">
    <location>
        <begin position="26"/>
        <end position="46"/>
    </location>
</feature>
<feature type="topological domain" description="Cytoplasmic" evidence="1">
    <location>
        <begin position="47"/>
        <end position="87"/>
    </location>
</feature>
<feature type="transmembrane region" description="Helical" evidence="1">
    <location>
        <begin position="88"/>
        <end position="108"/>
    </location>
</feature>
<feature type="topological domain" description="Periplasmic" evidence="1">
    <location>
        <begin position="109"/>
        <end position="127"/>
    </location>
</feature>
<feature type="transmembrane region" description="Helical" evidence="1">
    <location>
        <begin position="128"/>
        <end position="148"/>
    </location>
</feature>
<feature type="topological domain" description="Cytoplasmic" evidence="1">
    <location>
        <begin position="149"/>
        <end position="151"/>
    </location>
</feature>
<feature type="transmembrane region" description="Helical" evidence="1">
    <location>
        <begin position="152"/>
        <end position="172"/>
    </location>
</feature>
<feature type="topological domain" description="Periplasmic" evidence="1">
    <location>
        <begin position="173"/>
        <end position="193"/>
    </location>
</feature>
<feature type="transmembrane region" description="Helical" evidence="1">
    <location>
        <begin position="194"/>
        <end position="214"/>
    </location>
</feature>
<feature type="topological domain" description="Cytoplasmic" evidence="1">
    <location>
        <begin position="215"/>
        <end position="235"/>
    </location>
</feature>
<feature type="transmembrane region" description="Helical" evidence="1">
    <location>
        <begin position="236"/>
        <end position="256"/>
    </location>
</feature>
<feature type="topological domain" description="Periplasmic" evidence="1">
    <location>
        <begin position="257"/>
        <end position="276"/>
    </location>
</feature>
<feature type="transmembrane region" description="Helical" evidence="1">
    <location>
        <begin position="277"/>
        <end position="297"/>
    </location>
</feature>
<feature type="topological domain" description="Cytoplasmic" evidence="1">
    <location>
        <begin position="298"/>
        <end position="329"/>
    </location>
</feature>
<feature type="transmembrane region" description="Helical" evidence="1">
    <location>
        <begin position="330"/>
        <end position="350"/>
    </location>
</feature>
<feature type="topological domain" description="Periplasmic" evidence="1">
    <location>
        <begin position="351"/>
        <end position="353"/>
    </location>
</feature>
<feature type="transmembrane region" description="Helical" evidence="1">
    <location>
        <begin position="354"/>
        <end position="374"/>
    </location>
</feature>
<feature type="topological domain" description="Cytoplasmic" evidence="1">
    <location>
        <begin position="375"/>
        <end position="388"/>
    </location>
</feature>
<feature type="transmembrane region" description="Helical" evidence="1">
    <location>
        <begin position="389"/>
        <end position="409"/>
    </location>
</feature>
<reference key="1">
    <citation type="journal article" date="1997" name="Science">
        <title>The complete genome sequence of Escherichia coli K-12.</title>
        <authorList>
            <person name="Blattner F.R."/>
            <person name="Plunkett G. III"/>
            <person name="Bloch C.A."/>
            <person name="Perna N.T."/>
            <person name="Burland V."/>
            <person name="Riley M."/>
            <person name="Collado-Vides J."/>
            <person name="Glasner J.D."/>
            <person name="Rode C.K."/>
            <person name="Mayhew G.F."/>
            <person name="Gregor J."/>
            <person name="Davis N.W."/>
            <person name="Kirkpatrick H.A."/>
            <person name="Goeden M.A."/>
            <person name="Rose D.J."/>
            <person name="Mau B."/>
            <person name="Shao Y."/>
        </authorList>
    </citation>
    <scope>NUCLEOTIDE SEQUENCE [LARGE SCALE GENOMIC DNA]</scope>
    <source>
        <strain>K12 / MG1655 / ATCC 47076</strain>
    </source>
</reference>
<reference key="2">
    <citation type="journal article" date="2006" name="Mol. Syst. Biol.">
        <title>Highly accurate genome sequences of Escherichia coli K-12 strains MG1655 and W3110.</title>
        <authorList>
            <person name="Hayashi K."/>
            <person name="Morooka N."/>
            <person name="Yamamoto Y."/>
            <person name="Fujita K."/>
            <person name="Isono K."/>
            <person name="Choi S."/>
            <person name="Ohtsubo E."/>
            <person name="Baba T."/>
            <person name="Wanner B.L."/>
            <person name="Mori H."/>
            <person name="Horiuchi T."/>
        </authorList>
    </citation>
    <scope>NUCLEOTIDE SEQUENCE [LARGE SCALE GENOMIC DNA]</scope>
    <source>
        <strain>K12 / W3110 / ATCC 27325 / DSM 5911</strain>
    </source>
</reference>
<reference key="3">
    <citation type="journal article" date="2005" name="Science">
        <title>Global topology analysis of the Escherichia coli inner membrane proteome.</title>
        <authorList>
            <person name="Daley D.O."/>
            <person name="Rapp M."/>
            <person name="Granseth E."/>
            <person name="Melen K."/>
            <person name="Drew D."/>
            <person name="von Heijne G."/>
        </authorList>
    </citation>
    <scope>TOPOLOGY [LARGE SCALE ANALYSIS]</scope>
    <source>
        <strain>K12 / MG1655 / ATCC 47076</strain>
    </source>
</reference>
<protein>
    <recommendedName>
        <fullName>Inner membrane transport protein YqeG</fullName>
    </recommendedName>
</protein>
<gene>
    <name type="primary">yqeG</name>
    <name type="ordered locus">b2845</name>
    <name type="ordered locus">JW2813</name>
</gene>